<sequence>MRLTQGCFSFLPDLTDEQIEKQVNYAISKGWAMNVEWTDDPHPRNNYWELWGLPLFDIKDPASVMFELQEARKACAAGYIRMNAFDASYGTESCVMSFIVNRPANEPGFYLERAEGKGRQINYTIKSYSVQANPEGGRY</sequence>
<organism>
    <name type="scientific">Cylindrotheca sp. (strain N1)</name>
    <name type="common">Marine diatom</name>
    <dbReference type="NCBI Taxonomy" id="2855"/>
    <lineage>
        <taxon>Eukaryota</taxon>
        <taxon>Sar</taxon>
        <taxon>Stramenopiles</taxon>
        <taxon>Ochrophyta</taxon>
        <taxon>Bacillariophyta</taxon>
        <taxon>Bacillariophyceae</taxon>
        <taxon>Bacillariophycidae</taxon>
        <taxon>Bacillariales</taxon>
        <taxon>Bacillariaceae</taxon>
        <taxon>Cylindrotheca</taxon>
    </lineage>
</organism>
<feature type="chain" id="PRO_0000198595" description="Ribulose bisphosphate carboxylase small subunit">
    <location>
        <begin position="1"/>
        <end position="139"/>
    </location>
</feature>
<protein>
    <recommendedName>
        <fullName evidence="1">Ribulose bisphosphate carboxylase small subunit</fullName>
        <shortName evidence="1">RuBisCO small subunit</shortName>
    </recommendedName>
</protein>
<proteinExistence type="inferred from homology"/>
<dbReference type="EMBL" id="M59080">
    <property type="protein sequence ID" value="AAA84193.1"/>
    <property type="molecule type" value="Genomic_DNA"/>
</dbReference>
<dbReference type="PIR" id="B38728">
    <property type="entry name" value="RKQMSY"/>
</dbReference>
<dbReference type="SMR" id="P24683"/>
<dbReference type="GO" id="GO:0009507">
    <property type="term" value="C:chloroplast"/>
    <property type="evidence" value="ECO:0007669"/>
    <property type="project" value="UniProtKB-SubCell"/>
</dbReference>
<dbReference type="GO" id="GO:0016984">
    <property type="term" value="F:ribulose-bisphosphate carboxylase activity"/>
    <property type="evidence" value="ECO:0007669"/>
    <property type="project" value="UniProtKB-UniRule"/>
</dbReference>
<dbReference type="GO" id="GO:0019253">
    <property type="term" value="P:reductive pentose-phosphate cycle"/>
    <property type="evidence" value="ECO:0007669"/>
    <property type="project" value="UniProtKB-UniRule"/>
</dbReference>
<dbReference type="CDD" id="cd03527">
    <property type="entry name" value="RuBisCO_small"/>
    <property type="match status" value="1"/>
</dbReference>
<dbReference type="Gene3D" id="3.30.190.10">
    <property type="entry name" value="Ribulose bisphosphate carboxylase, small subunit"/>
    <property type="match status" value="1"/>
</dbReference>
<dbReference type="HAMAP" id="MF_00859">
    <property type="entry name" value="RuBisCO_S_bact"/>
    <property type="match status" value="1"/>
</dbReference>
<dbReference type="InterPro" id="IPR024681">
    <property type="entry name" value="RuBisCO_ssu"/>
</dbReference>
<dbReference type="InterPro" id="IPR000894">
    <property type="entry name" value="RuBisCO_ssu_dom"/>
</dbReference>
<dbReference type="InterPro" id="IPR036385">
    <property type="entry name" value="RuBisCO_ssu_sf"/>
</dbReference>
<dbReference type="PANTHER" id="PTHR31262">
    <property type="entry name" value="RIBULOSE BISPHOSPHATE CARBOXYLASE SMALL CHAIN 1, CHLOROPLASTIC"/>
    <property type="match status" value="1"/>
</dbReference>
<dbReference type="PANTHER" id="PTHR31262:SF23">
    <property type="entry name" value="RIBULOSE BISPHOSPHATE CARBOXYLASE SMALL SUBUNIT"/>
    <property type="match status" value="1"/>
</dbReference>
<dbReference type="Pfam" id="PF00101">
    <property type="entry name" value="RuBisCO_small"/>
    <property type="match status" value="1"/>
</dbReference>
<dbReference type="SMART" id="SM00961">
    <property type="entry name" value="RuBisCO_small"/>
    <property type="match status" value="1"/>
</dbReference>
<dbReference type="SUPFAM" id="SSF55239">
    <property type="entry name" value="RuBisCO, small subunit"/>
    <property type="match status" value="1"/>
</dbReference>
<accession>P24683</accession>
<comment type="function">
    <text evidence="1">RuBisCO catalyzes two reactions: the carboxylation of D-ribulose 1,5-bisphosphate, the primary event in carbon dioxide fixation, as well as the oxidative fragmentation of the pentose substrate in the photorespiration process. Both reactions occur simultaneously and in competition at the same active site. Although the small subunit is not catalytic it is essential for maximal activity.</text>
</comment>
<comment type="subunit">
    <text evidence="1">Heterohexadecamer of 8 large and 8 small subunits.</text>
</comment>
<comment type="subcellular location">
    <subcellularLocation>
        <location evidence="1">Plastid</location>
        <location evidence="1">Chloroplast</location>
    </subcellularLocation>
</comment>
<comment type="miscellaneous">
    <text evidence="1">The basic functional RuBisCO is composed of a large chain homodimer in a 'head-to-tail' conformation. In form I RuBisCO this homodimer is arranged in a barrel-like tetramer with the small subunits forming a tetrameric 'cap' on each end of the 'barrel'.</text>
</comment>
<comment type="similarity">
    <text evidence="1">Belongs to the RuBisCO small chain family.</text>
</comment>
<geneLocation type="chloroplast"/>
<gene>
    <name evidence="1" type="primary">rbcS</name>
    <name type="synonym">ssu8</name>
</gene>
<name>RBS_CYLSN</name>
<evidence type="ECO:0000255" key="1">
    <source>
        <dbReference type="HAMAP-Rule" id="MF_00859"/>
    </source>
</evidence>
<keyword id="KW-0113">Calvin cycle</keyword>
<keyword id="KW-0120">Carbon dioxide fixation</keyword>
<keyword id="KW-0150">Chloroplast</keyword>
<keyword id="KW-0601">Photorespiration</keyword>
<keyword id="KW-0602">Photosynthesis</keyword>
<keyword id="KW-0934">Plastid</keyword>
<reference key="1">
    <citation type="journal article" date="1991" name="J. Biol. Chem.">
        <title>Cotranscription, deduced primary structure, and expression of the chloroplast-encoded rbcL and rbcS genes of the marine diatom Cylindrotheca sp. strain N1.</title>
        <authorList>
            <person name="Hwang S.-R."/>
            <person name="Tabita F.R."/>
        </authorList>
    </citation>
    <scope>NUCLEOTIDE SEQUENCE [GENOMIC DNA]</scope>
</reference>